<sequence>MNVTENALLFKCGSKGYINQTYTPTEIYNCGVAEGKKTAKEKNPTYSIFYDTFLTGQPAESPETFTCGSHGFTNASYVASDFYACGFLQGKGTETNAGIHNTRPSHSLAKFTILFMLVLYTIV</sequence>
<gene>
    <name type="ordered locus">YDL241W</name>
</gene>
<evidence type="ECO:0000269" key="1">
    <source>
    </source>
</evidence>
<evidence type="ECO:0000269" key="2">
    <source>
    </source>
</evidence>
<accession>Q07738</accession>
<accession>D6VRB5</accession>
<reference key="1">
    <citation type="journal article" date="1997" name="Nature">
        <title>The nucleotide sequence of Saccharomyces cerevisiae chromosome IV.</title>
        <authorList>
            <person name="Jacq C."/>
            <person name="Alt-Moerbe J."/>
            <person name="Andre B."/>
            <person name="Arnold W."/>
            <person name="Bahr A."/>
            <person name="Ballesta J.P.G."/>
            <person name="Bargues M."/>
            <person name="Baron L."/>
            <person name="Becker A."/>
            <person name="Biteau N."/>
            <person name="Bloecker H."/>
            <person name="Blugeon C."/>
            <person name="Boskovic J."/>
            <person name="Brandt P."/>
            <person name="Brueckner M."/>
            <person name="Buitrago M.J."/>
            <person name="Coster F."/>
            <person name="Delaveau T."/>
            <person name="del Rey F."/>
            <person name="Dujon B."/>
            <person name="Eide L.G."/>
            <person name="Garcia-Cantalejo J.M."/>
            <person name="Goffeau A."/>
            <person name="Gomez-Peris A."/>
            <person name="Granotier C."/>
            <person name="Hanemann V."/>
            <person name="Hankeln T."/>
            <person name="Hoheisel J.D."/>
            <person name="Jaeger W."/>
            <person name="Jimenez A."/>
            <person name="Jonniaux J.-L."/>
            <person name="Kraemer C."/>
            <person name="Kuester H."/>
            <person name="Laamanen P."/>
            <person name="Legros Y."/>
            <person name="Louis E.J."/>
            <person name="Moeller-Rieker S."/>
            <person name="Monnet A."/>
            <person name="Moro M."/>
            <person name="Mueller-Auer S."/>
            <person name="Nussbaumer B."/>
            <person name="Paricio N."/>
            <person name="Paulin L."/>
            <person name="Perea J."/>
            <person name="Perez-Alonso M."/>
            <person name="Perez-Ortin J.E."/>
            <person name="Pohl T.M."/>
            <person name="Prydz H."/>
            <person name="Purnelle B."/>
            <person name="Rasmussen S.W."/>
            <person name="Remacha M.A."/>
            <person name="Revuelta J.L."/>
            <person name="Rieger M."/>
            <person name="Salom D."/>
            <person name="Saluz H.P."/>
            <person name="Saiz J.E."/>
            <person name="Saren A.-M."/>
            <person name="Schaefer M."/>
            <person name="Scharfe M."/>
            <person name="Schmidt E.R."/>
            <person name="Schneider C."/>
            <person name="Scholler P."/>
            <person name="Schwarz S."/>
            <person name="Soler-Mira A."/>
            <person name="Urrestarazu L.A."/>
            <person name="Verhasselt P."/>
            <person name="Vissers S."/>
            <person name="Voet M."/>
            <person name="Volckaert G."/>
            <person name="Wagner G."/>
            <person name="Wambutt R."/>
            <person name="Wedler E."/>
            <person name="Wedler H."/>
            <person name="Woelfl S."/>
            <person name="Harris D.E."/>
            <person name="Bowman S."/>
            <person name="Brown D."/>
            <person name="Churcher C.M."/>
            <person name="Connor R."/>
            <person name="Dedman K."/>
            <person name="Gentles S."/>
            <person name="Hamlin N."/>
            <person name="Hunt S."/>
            <person name="Jones L."/>
            <person name="McDonald S."/>
            <person name="Murphy L.D."/>
            <person name="Niblett D."/>
            <person name="Odell C."/>
            <person name="Oliver K."/>
            <person name="Rajandream M.A."/>
            <person name="Richards C."/>
            <person name="Shore L."/>
            <person name="Walsh S.V."/>
            <person name="Barrell B.G."/>
            <person name="Dietrich F.S."/>
            <person name="Mulligan J.T."/>
            <person name="Allen E."/>
            <person name="Araujo R."/>
            <person name="Aviles E."/>
            <person name="Berno A."/>
            <person name="Carpenter J."/>
            <person name="Chen E."/>
            <person name="Cherry J.M."/>
            <person name="Chung E."/>
            <person name="Duncan M."/>
            <person name="Hunicke-Smith S."/>
            <person name="Hyman R.W."/>
            <person name="Komp C."/>
            <person name="Lashkari D."/>
            <person name="Lew H."/>
            <person name="Lin D."/>
            <person name="Mosedale D."/>
            <person name="Nakahara K."/>
            <person name="Namath A."/>
            <person name="Oefner P."/>
            <person name="Oh C."/>
            <person name="Petel F.X."/>
            <person name="Roberts D."/>
            <person name="Schramm S."/>
            <person name="Schroeder M."/>
            <person name="Shogren T."/>
            <person name="Shroff N."/>
            <person name="Winant A."/>
            <person name="Yelton M.A."/>
            <person name="Botstein D."/>
            <person name="Davis R.W."/>
            <person name="Johnston M."/>
            <person name="Andrews S."/>
            <person name="Brinkman R."/>
            <person name="Cooper J."/>
            <person name="Ding H."/>
            <person name="Du Z."/>
            <person name="Favello A."/>
            <person name="Fulton L."/>
            <person name="Gattung S."/>
            <person name="Greco T."/>
            <person name="Hallsworth K."/>
            <person name="Hawkins J."/>
            <person name="Hillier L.W."/>
            <person name="Jier M."/>
            <person name="Johnson D."/>
            <person name="Johnston L."/>
            <person name="Kirsten J."/>
            <person name="Kucaba T."/>
            <person name="Langston Y."/>
            <person name="Latreille P."/>
            <person name="Le T."/>
            <person name="Mardis E."/>
            <person name="Menezes S."/>
            <person name="Miller N."/>
            <person name="Nhan M."/>
            <person name="Pauley A."/>
            <person name="Peluso D."/>
            <person name="Rifkin L."/>
            <person name="Riles L."/>
            <person name="Taich A."/>
            <person name="Trevaskis E."/>
            <person name="Vignati D."/>
            <person name="Wilcox L."/>
            <person name="Wohldman P."/>
            <person name="Vaudin M."/>
            <person name="Wilson R."/>
            <person name="Waterston R."/>
            <person name="Albermann K."/>
            <person name="Hani J."/>
            <person name="Heumann K."/>
            <person name="Kleine K."/>
            <person name="Mewes H.-W."/>
            <person name="Zollner A."/>
            <person name="Zaccaria P."/>
        </authorList>
    </citation>
    <scope>NUCLEOTIDE SEQUENCE [LARGE SCALE GENOMIC DNA]</scope>
    <source>
        <strain>ATCC 204508 / S288c</strain>
    </source>
</reference>
<reference key="2">
    <citation type="journal article" date="2014" name="G3 (Bethesda)">
        <title>The reference genome sequence of Saccharomyces cerevisiae: Then and now.</title>
        <authorList>
            <person name="Engel S.R."/>
            <person name="Dietrich F.S."/>
            <person name="Fisk D.G."/>
            <person name="Binkley G."/>
            <person name="Balakrishnan R."/>
            <person name="Costanzo M.C."/>
            <person name="Dwight S.S."/>
            <person name="Hitz B.C."/>
            <person name="Karra K."/>
            <person name="Nash R.S."/>
            <person name="Weng S."/>
            <person name="Wong E.D."/>
            <person name="Lloyd P."/>
            <person name="Skrzypek M.S."/>
            <person name="Miyasato S.R."/>
            <person name="Simison M."/>
            <person name="Cherry J.M."/>
        </authorList>
    </citation>
    <scope>GENOME REANNOTATION</scope>
    <source>
        <strain>ATCC 204508 / S288c</strain>
    </source>
</reference>
<reference key="3">
    <citation type="journal article" date="2007" name="Genome Res.">
        <title>Approaching a complete repository of sequence-verified protein-encoding clones for Saccharomyces cerevisiae.</title>
        <authorList>
            <person name="Hu Y."/>
            <person name="Rolfs A."/>
            <person name="Bhullar B."/>
            <person name="Murthy T.V.S."/>
            <person name="Zhu C."/>
            <person name="Berger M.F."/>
            <person name="Camargo A.A."/>
            <person name="Kelley F."/>
            <person name="McCarron S."/>
            <person name="Jepson D."/>
            <person name="Richardson A."/>
            <person name="Raphael J."/>
            <person name="Moreira D."/>
            <person name="Taycher E."/>
            <person name="Zuo D."/>
            <person name="Mohr S."/>
            <person name="Kane M.F."/>
            <person name="Williamson J."/>
            <person name="Simpson A.J.G."/>
            <person name="Bulyk M.L."/>
            <person name="Harlow E."/>
            <person name="Marsischky G."/>
            <person name="Kolodner R.D."/>
            <person name="LaBaer J."/>
        </authorList>
    </citation>
    <scope>NUCLEOTIDE SEQUENCE [GENOMIC DNA]</scope>
    <source>
        <strain>ATCC 204508 / S288c</strain>
    </source>
</reference>
<reference key="4">
    <citation type="journal article" date="1999" name="J. Bacteriol.">
        <title>Genome-wide transcriptional analysis of aerobic and anaerobic chemostat cultures of Saccharomyces cerevisiae.</title>
        <authorList>
            <person name="ter Linde J.J.M."/>
            <person name="Liang H."/>
            <person name="Davis R.W."/>
            <person name="Steensma H.Y."/>
            <person name="van Dijken J.P."/>
            <person name="Pronk J.T."/>
        </authorList>
    </citation>
    <scope>INDUCTION</scope>
</reference>
<reference key="5">
    <citation type="journal article" date="2003" name="Nature">
        <title>Global analysis of protein expression in yeast.</title>
        <authorList>
            <person name="Ghaemmaghami S."/>
            <person name="Huh W.-K."/>
            <person name="Bower K."/>
            <person name="Howson R.W."/>
            <person name="Belle A."/>
            <person name="Dephoure N."/>
            <person name="O'Shea E.K."/>
            <person name="Weissman J.S."/>
        </authorList>
    </citation>
    <scope>LEVEL OF PROTEIN EXPRESSION [LARGE SCALE ANALYSIS]</scope>
</reference>
<keyword id="KW-1185">Reference proteome</keyword>
<feature type="chain" id="PRO_0000242485" description="Uncharacterized protein YDL241W">
    <location>
        <begin position="1"/>
        <end position="123"/>
    </location>
</feature>
<dbReference type="EMBL" id="Z74289">
    <property type="protein sequence ID" value="CAA98821.1"/>
    <property type="molecule type" value="Genomic_DNA"/>
</dbReference>
<dbReference type="EMBL" id="AY558375">
    <property type="protein sequence ID" value="AAS56701.1"/>
    <property type="molecule type" value="Genomic_DNA"/>
</dbReference>
<dbReference type="EMBL" id="BK006938">
    <property type="protein sequence ID" value="DAA11625.1"/>
    <property type="molecule type" value="Genomic_DNA"/>
</dbReference>
<dbReference type="PIR" id="S67805">
    <property type="entry name" value="S67805"/>
</dbReference>
<dbReference type="RefSeq" id="NP_010040.1">
    <property type="nucleotide sequence ID" value="NM_001180301.1"/>
</dbReference>
<dbReference type="BioGRID" id="31870">
    <property type="interactions" value="44"/>
</dbReference>
<dbReference type="DIP" id="DIP-4623N"/>
<dbReference type="FunCoup" id="Q07738">
    <property type="interactions" value="71"/>
</dbReference>
<dbReference type="IntAct" id="Q07738">
    <property type="interactions" value="1"/>
</dbReference>
<dbReference type="MINT" id="Q07738"/>
<dbReference type="STRING" id="4932.YDL241W"/>
<dbReference type="PaxDb" id="4932-YDL241W"/>
<dbReference type="PeptideAtlas" id="Q07738"/>
<dbReference type="EnsemblFungi" id="YDL241W_mRNA">
    <property type="protein sequence ID" value="YDL241W"/>
    <property type="gene ID" value="YDL241W"/>
</dbReference>
<dbReference type="GeneID" id="851356"/>
<dbReference type="KEGG" id="sce:YDL241W"/>
<dbReference type="AGR" id="SGD:S000002400"/>
<dbReference type="SGD" id="S000002400">
    <property type="gene designation" value="YDL241W"/>
</dbReference>
<dbReference type="VEuPathDB" id="FungiDB:YDL241W"/>
<dbReference type="HOGENOM" id="CLU_2074484_0_0_1"/>
<dbReference type="InParanoid" id="Q07738"/>
<dbReference type="OrthoDB" id="4038716at2759"/>
<dbReference type="BioCyc" id="YEAST:G3O-29618-MONOMER"/>
<dbReference type="BioGRID-ORCS" id="851356">
    <property type="hits" value="1 hit in 10 CRISPR screens"/>
</dbReference>
<dbReference type="PRO" id="PR:Q07738"/>
<dbReference type="Proteomes" id="UP000002311">
    <property type="component" value="Chromosome IV"/>
</dbReference>
<dbReference type="RNAct" id="Q07738">
    <property type="molecule type" value="protein"/>
</dbReference>
<dbReference type="GO" id="GO:0005783">
    <property type="term" value="C:endoplasmic reticulum"/>
    <property type="evidence" value="ECO:0007005"/>
    <property type="project" value="SGD"/>
</dbReference>
<name>YD241_YEAST</name>
<proteinExistence type="evidence at protein level"/>
<organism>
    <name type="scientific">Saccharomyces cerevisiae (strain ATCC 204508 / S288c)</name>
    <name type="common">Baker's yeast</name>
    <dbReference type="NCBI Taxonomy" id="559292"/>
    <lineage>
        <taxon>Eukaryota</taxon>
        <taxon>Fungi</taxon>
        <taxon>Dikarya</taxon>
        <taxon>Ascomycota</taxon>
        <taxon>Saccharomycotina</taxon>
        <taxon>Saccharomycetes</taxon>
        <taxon>Saccharomycetales</taxon>
        <taxon>Saccharomycetaceae</taxon>
        <taxon>Saccharomyces</taxon>
    </lineage>
</organism>
<comment type="induction">
    <text evidence="1">Induced under anaerobic conditions.</text>
</comment>
<comment type="miscellaneous">
    <text evidence="2">Present with 1300 molecules/cell in log phase SD medium.</text>
</comment>
<protein>
    <recommendedName>
        <fullName>Uncharacterized protein YDL241W</fullName>
    </recommendedName>
</protein>